<feature type="chain" id="PRO_0000229137" description="2,3-bisphosphoglycerate-dependent phosphoglycerate mutase">
    <location>
        <begin position="1"/>
        <end position="248"/>
    </location>
</feature>
<feature type="active site" description="Tele-phosphohistidine intermediate" evidence="1">
    <location>
        <position position="9"/>
    </location>
</feature>
<feature type="active site" description="Proton donor/acceptor" evidence="1">
    <location>
        <position position="87"/>
    </location>
</feature>
<feature type="binding site" evidence="1">
    <location>
        <begin position="8"/>
        <end position="15"/>
    </location>
    <ligand>
        <name>substrate</name>
    </ligand>
</feature>
<feature type="binding site" evidence="1">
    <location>
        <begin position="21"/>
        <end position="22"/>
    </location>
    <ligand>
        <name>substrate</name>
    </ligand>
</feature>
<feature type="binding site" evidence="1">
    <location>
        <position position="60"/>
    </location>
    <ligand>
        <name>substrate</name>
    </ligand>
</feature>
<feature type="binding site" evidence="1">
    <location>
        <begin position="87"/>
        <end position="90"/>
    </location>
    <ligand>
        <name>substrate</name>
    </ligand>
</feature>
<feature type="binding site" evidence="1">
    <location>
        <position position="98"/>
    </location>
    <ligand>
        <name>substrate</name>
    </ligand>
</feature>
<feature type="binding site" evidence="1">
    <location>
        <begin position="114"/>
        <end position="115"/>
    </location>
    <ligand>
        <name>substrate</name>
    </ligand>
</feature>
<feature type="binding site" evidence="1">
    <location>
        <begin position="183"/>
        <end position="184"/>
    </location>
    <ligand>
        <name>substrate</name>
    </ligand>
</feature>
<feature type="site" description="Transition state stabilizer" evidence="1">
    <location>
        <position position="182"/>
    </location>
</feature>
<gene>
    <name evidence="1" type="primary">gpmA</name>
    <name type="ordered locus">Reut_A0304</name>
</gene>
<comment type="function">
    <text evidence="1">Catalyzes the interconversion of 2-phosphoglycerate and 3-phosphoglycerate.</text>
</comment>
<comment type="catalytic activity">
    <reaction evidence="1">
        <text>(2R)-2-phosphoglycerate = (2R)-3-phosphoglycerate</text>
        <dbReference type="Rhea" id="RHEA:15901"/>
        <dbReference type="ChEBI" id="CHEBI:58272"/>
        <dbReference type="ChEBI" id="CHEBI:58289"/>
        <dbReference type="EC" id="5.4.2.11"/>
    </reaction>
</comment>
<comment type="pathway">
    <text evidence="1">Carbohydrate degradation; glycolysis; pyruvate from D-glyceraldehyde 3-phosphate: step 3/5.</text>
</comment>
<comment type="subunit">
    <text evidence="1">Homodimer.</text>
</comment>
<comment type="similarity">
    <text evidence="1">Belongs to the phosphoglycerate mutase family. BPG-dependent PGAM subfamily.</text>
</comment>
<sequence>MYKLVLIRHGESTWNLENRFTGWVDVDLTDTGAAQARLAGKLLKEAGFAFDVAYTSVLKRAIRTLWHVQDEMDEMWIPVRNEWRLNERHYGALAGLNKAETAAKFGDEQVLVWRRSYDTPPPALEPTDPRASYDDPRYANVPREQIPLTECLKDTVARVLPLWNESIAPDIQSGKRVVIAAHGNSIRALVKYLDQISDDDIVGLNIPNGTPLVYELDASLRPLRHYYLGDQEAIAASLAAVASQGKAR</sequence>
<accession>Q476J7</accession>
<protein>
    <recommendedName>
        <fullName evidence="1">2,3-bisphosphoglycerate-dependent phosphoglycerate mutase</fullName>
        <shortName evidence="1">BPG-dependent PGAM</shortName>
        <shortName evidence="1">PGAM</shortName>
        <shortName evidence="1">Phosphoglyceromutase</shortName>
        <shortName evidence="1">dPGM</shortName>
        <ecNumber evidence="1">5.4.2.11</ecNumber>
    </recommendedName>
</protein>
<proteinExistence type="inferred from homology"/>
<dbReference type="EC" id="5.4.2.11" evidence="1"/>
<dbReference type="EMBL" id="CP000090">
    <property type="protein sequence ID" value="AAZ59686.1"/>
    <property type="molecule type" value="Genomic_DNA"/>
</dbReference>
<dbReference type="SMR" id="Q476J7"/>
<dbReference type="STRING" id="264198.Reut_A0304"/>
<dbReference type="KEGG" id="reu:Reut_A0304"/>
<dbReference type="eggNOG" id="COG0588">
    <property type="taxonomic scope" value="Bacteria"/>
</dbReference>
<dbReference type="HOGENOM" id="CLU_033323_1_1_4"/>
<dbReference type="OrthoDB" id="9781415at2"/>
<dbReference type="UniPathway" id="UPA00109">
    <property type="reaction ID" value="UER00186"/>
</dbReference>
<dbReference type="GO" id="GO:0004619">
    <property type="term" value="F:phosphoglycerate mutase activity"/>
    <property type="evidence" value="ECO:0007669"/>
    <property type="project" value="UniProtKB-EC"/>
</dbReference>
<dbReference type="GO" id="GO:0006094">
    <property type="term" value="P:gluconeogenesis"/>
    <property type="evidence" value="ECO:0007669"/>
    <property type="project" value="UniProtKB-UniRule"/>
</dbReference>
<dbReference type="GO" id="GO:0006096">
    <property type="term" value="P:glycolytic process"/>
    <property type="evidence" value="ECO:0007669"/>
    <property type="project" value="UniProtKB-UniRule"/>
</dbReference>
<dbReference type="CDD" id="cd07067">
    <property type="entry name" value="HP_PGM_like"/>
    <property type="match status" value="1"/>
</dbReference>
<dbReference type="FunFam" id="3.40.50.1240:FF:000003">
    <property type="entry name" value="2,3-bisphosphoglycerate-dependent phosphoglycerate mutase"/>
    <property type="match status" value="1"/>
</dbReference>
<dbReference type="Gene3D" id="3.40.50.1240">
    <property type="entry name" value="Phosphoglycerate mutase-like"/>
    <property type="match status" value="1"/>
</dbReference>
<dbReference type="HAMAP" id="MF_01039">
    <property type="entry name" value="PGAM_GpmA"/>
    <property type="match status" value="1"/>
</dbReference>
<dbReference type="InterPro" id="IPR013078">
    <property type="entry name" value="His_Pase_superF_clade-1"/>
</dbReference>
<dbReference type="InterPro" id="IPR029033">
    <property type="entry name" value="His_PPase_superfam"/>
</dbReference>
<dbReference type="InterPro" id="IPR001345">
    <property type="entry name" value="PG/BPGM_mutase_AS"/>
</dbReference>
<dbReference type="InterPro" id="IPR005952">
    <property type="entry name" value="Phosphogly_mut1"/>
</dbReference>
<dbReference type="NCBIfam" id="TIGR01258">
    <property type="entry name" value="pgm_1"/>
    <property type="match status" value="1"/>
</dbReference>
<dbReference type="NCBIfam" id="NF010713">
    <property type="entry name" value="PRK14115.1"/>
    <property type="match status" value="1"/>
</dbReference>
<dbReference type="PANTHER" id="PTHR11931">
    <property type="entry name" value="PHOSPHOGLYCERATE MUTASE"/>
    <property type="match status" value="1"/>
</dbReference>
<dbReference type="Pfam" id="PF00300">
    <property type="entry name" value="His_Phos_1"/>
    <property type="match status" value="1"/>
</dbReference>
<dbReference type="PIRSF" id="PIRSF000709">
    <property type="entry name" value="6PFK_2-Ptase"/>
    <property type="match status" value="1"/>
</dbReference>
<dbReference type="SMART" id="SM00855">
    <property type="entry name" value="PGAM"/>
    <property type="match status" value="1"/>
</dbReference>
<dbReference type="SUPFAM" id="SSF53254">
    <property type="entry name" value="Phosphoglycerate mutase-like"/>
    <property type="match status" value="1"/>
</dbReference>
<dbReference type="PROSITE" id="PS00175">
    <property type="entry name" value="PG_MUTASE"/>
    <property type="match status" value="1"/>
</dbReference>
<organism>
    <name type="scientific">Cupriavidus pinatubonensis (strain JMP 134 / LMG 1197)</name>
    <name type="common">Cupriavidus necator (strain JMP 134)</name>
    <dbReference type="NCBI Taxonomy" id="264198"/>
    <lineage>
        <taxon>Bacteria</taxon>
        <taxon>Pseudomonadati</taxon>
        <taxon>Pseudomonadota</taxon>
        <taxon>Betaproteobacteria</taxon>
        <taxon>Burkholderiales</taxon>
        <taxon>Burkholderiaceae</taxon>
        <taxon>Cupriavidus</taxon>
    </lineage>
</organism>
<name>GPMA_CUPPJ</name>
<evidence type="ECO:0000255" key="1">
    <source>
        <dbReference type="HAMAP-Rule" id="MF_01039"/>
    </source>
</evidence>
<keyword id="KW-0312">Gluconeogenesis</keyword>
<keyword id="KW-0324">Glycolysis</keyword>
<keyword id="KW-0413">Isomerase</keyword>
<reference key="1">
    <citation type="journal article" date="2010" name="PLoS ONE">
        <title>The complete multipartite genome sequence of Cupriavidus necator JMP134, a versatile pollutant degrader.</title>
        <authorList>
            <person name="Lykidis A."/>
            <person name="Perez-Pantoja D."/>
            <person name="Ledger T."/>
            <person name="Mavromatis K."/>
            <person name="Anderson I.J."/>
            <person name="Ivanova N.N."/>
            <person name="Hooper S.D."/>
            <person name="Lapidus A."/>
            <person name="Lucas S."/>
            <person name="Gonzalez B."/>
            <person name="Kyrpides N.C."/>
        </authorList>
    </citation>
    <scope>NUCLEOTIDE SEQUENCE [LARGE SCALE GENOMIC DNA]</scope>
    <source>
        <strain>JMP134 / LMG 1197</strain>
    </source>
</reference>